<accession>Q8YFY2</accession>
<keyword id="KW-0274">FAD</keyword>
<keyword id="KW-0285">Flavoprotein</keyword>
<keyword id="KW-0520">NAD</keyword>
<keyword id="KW-0560">Oxidoreductase</keyword>
<protein>
    <recommendedName>
        <fullName evidence="1">Oxygen-dependent choline dehydrogenase</fullName>
        <shortName evidence="1">CDH</shortName>
        <shortName evidence="1">CHD</shortName>
        <ecNumber evidence="1">1.1.99.1</ecNumber>
    </recommendedName>
    <alternativeName>
        <fullName evidence="1">Betaine aldehyde dehydrogenase</fullName>
        <shortName evidence="1">BADH</shortName>
        <ecNumber evidence="1">1.2.1.8</ecNumber>
    </alternativeName>
</protein>
<gene>
    <name evidence="1" type="primary">betA</name>
    <name type="ordered locus">BMEI1380</name>
</gene>
<sequence length="549" mass="60665">MEADFVIIGSGSAGSAMAYRLSEDGRYSVIVIEYGVPDVGPLIQMPAALSFPMNMETYDWGFSSEPEPHIRGRSLVTPRGKVLGGSSSINGMVYVRGHACDFDHWSQSGARGWAYADVLPYFKRMENSQGGQEGWRGTNGPLYVQRGKRDNPLFHAFVEAGHQAGFEVTDDYNGEKQEGFGPMEQTIHNGRRWSAANAYLKPALKRPNVKLVKGFARKIVLEGKRAVGVEIEAGRTFSTIRARREVIIAASSINSPKLLMLSGIGPAAHLKEHGIDLVADRPGVGQNLQDHLEVYIQQECTQPITLYSKLNLFSKARIGVEWLLFKTGDGATNHFESAAFVRSKAGVEYPDIQYHFLPVAIRYDGKAAAQSHGFQAHVGPMRSKSRGSVTLRSANPREKPVIKFNYMSHEDDWADFRHCVRLTREIFGQAAFDPYRGAEIQPGAHVQTDDEIDNFIREHVESAFHPCGTCKMGAVDDPMAVVDPECRVIGVEGLRVADSSIFPRITNGNLNGPSIMVGEKASGHILGRTPLARSNQEPWINPRWQVSDR</sequence>
<dbReference type="EC" id="1.1.99.1" evidence="1"/>
<dbReference type="EC" id="1.2.1.8" evidence="1"/>
<dbReference type="EMBL" id="AE008917">
    <property type="protein sequence ID" value="AAL52561.1"/>
    <property type="status" value="ALT_FRAME"/>
    <property type="molecule type" value="Genomic_DNA"/>
</dbReference>
<dbReference type="PIR" id="AF3424">
    <property type="entry name" value="AF3424"/>
</dbReference>
<dbReference type="SMR" id="Q8YFY2"/>
<dbReference type="KEGG" id="bme:BMEI1380"/>
<dbReference type="eggNOG" id="COG2303">
    <property type="taxonomic scope" value="Bacteria"/>
</dbReference>
<dbReference type="UniPathway" id="UPA00529">
    <property type="reaction ID" value="UER00385"/>
</dbReference>
<dbReference type="Proteomes" id="UP000000419">
    <property type="component" value="Chromosome I"/>
</dbReference>
<dbReference type="GO" id="GO:0008802">
    <property type="term" value="F:betaine-aldehyde dehydrogenase (NAD+) activity"/>
    <property type="evidence" value="ECO:0007669"/>
    <property type="project" value="UniProtKB-EC"/>
</dbReference>
<dbReference type="GO" id="GO:0008812">
    <property type="term" value="F:choline dehydrogenase activity"/>
    <property type="evidence" value="ECO:0007669"/>
    <property type="project" value="UniProtKB-UniRule"/>
</dbReference>
<dbReference type="GO" id="GO:0050660">
    <property type="term" value="F:flavin adenine dinucleotide binding"/>
    <property type="evidence" value="ECO:0007669"/>
    <property type="project" value="InterPro"/>
</dbReference>
<dbReference type="GO" id="GO:0019285">
    <property type="term" value="P:glycine betaine biosynthetic process from choline"/>
    <property type="evidence" value="ECO:0007669"/>
    <property type="project" value="UniProtKB-UniRule"/>
</dbReference>
<dbReference type="Gene3D" id="3.50.50.60">
    <property type="entry name" value="FAD/NAD(P)-binding domain"/>
    <property type="match status" value="1"/>
</dbReference>
<dbReference type="Gene3D" id="3.30.560.10">
    <property type="entry name" value="Glucose Oxidase, domain 3"/>
    <property type="match status" value="1"/>
</dbReference>
<dbReference type="HAMAP" id="MF_00750">
    <property type="entry name" value="Choline_dehydrogen"/>
    <property type="match status" value="1"/>
</dbReference>
<dbReference type="InterPro" id="IPR011533">
    <property type="entry name" value="BetA"/>
</dbReference>
<dbReference type="InterPro" id="IPR036188">
    <property type="entry name" value="FAD/NAD-bd_sf"/>
</dbReference>
<dbReference type="InterPro" id="IPR012132">
    <property type="entry name" value="GMC_OxRdtase"/>
</dbReference>
<dbReference type="InterPro" id="IPR000172">
    <property type="entry name" value="GMC_OxRdtase_N"/>
</dbReference>
<dbReference type="InterPro" id="IPR007867">
    <property type="entry name" value="GMC_OxRtase_C"/>
</dbReference>
<dbReference type="NCBIfam" id="TIGR01810">
    <property type="entry name" value="betA"/>
    <property type="match status" value="1"/>
</dbReference>
<dbReference type="NCBIfam" id="NF002550">
    <property type="entry name" value="PRK02106.1"/>
    <property type="match status" value="1"/>
</dbReference>
<dbReference type="PANTHER" id="PTHR11552:SF147">
    <property type="entry name" value="CHOLINE DEHYDROGENASE, MITOCHONDRIAL"/>
    <property type="match status" value="1"/>
</dbReference>
<dbReference type="PANTHER" id="PTHR11552">
    <property type="entry name" value="GLUCOSE-METHANOL-CHOLINE GMC OXIDOREDUCTASE"/>
    <property type="match status" value="1"/>
</dbReference>
<dbReference type="Pfam" id="PF05199">
    <property type="entry name" value="GMC_oxred_C"/>
    <property type="match status" value="1"/>
</dbReference>
<dbReference type="Pfam" id="PF00732">
    <property type="entry name" value="GMC_oxred_N"/>
    <property type="match status" value="1"/>
</dbReference>
<dbReference type="PIRSF" id="PIRSF000137">
    <property type="entry name" value="Alcohol_oxidase"/>
    <property type="match status" value="1"/>
</dbReference>
<dbReference type="SUPFAM" id="SSF54373">
    <property type="entry name" value="FAD-linked reductases, C-terminal domain"/>
    <property type="match status" value="1"/>
</dbReference>
<dbReference type="SUPFAM" id="SSF51905">
    <property type="entry name" value="FAD/NAD(P)-binding domain"/>
    <property type="match status" value="1"/>
</dbReference>
<dbReference type="PROSITE" id="PS00623">
    <property type="entry name" value="GMC_OXRED_1"/>
    <property type="match status" value="1"/>
</dbReference>
<dbReference type="PROSITE" id="PS00624">
    <property type="entry name" value="GMC_OXRED_2"/>
    <property type="match status" value="1"/>
</dbReference>
<name>BETA_BRUME</name>
<reference key="1">
    <citation type="journal article" date="2002" name="Proc. Natl. Acad. Sci. U.S.A.">
        <title>The genome sequence of the facultative intracellular pathogen Brucella melitensis.</title>
        <authorList>
            <person name="DelVecchio V.G."/>
            <person name="Kapatral V."/>
            <person name="Redkar R.J."/>
            <person name="Patra G."/>
            <person name="Mujer C."/>
            <person name="Los T."/>
            <person name="Ivanova N."/>
            <person name="Anderson I."/>
            <person name="Bhattacharyya A."/>
            <person name="Lykidis A."/>
            <person name="Reznik G."/>
            <person name="Jablonski L."/>
            <person name="Larsen N."/>
            <person name="D'Souza M."/>
            <person name="Bernal A."/>
            <person name="Mazur M."/>
            <person name="Goltsman E."/>
            <person name="Selkov E."/>
            <person name="Elzer P.H."/>
            <person name="Hagius S."/>
            <person name="O'Callaghan D."/>
            <person name="Letesson J.-J."/>
            <person name="Haselkorn R."/>
            <person name="Kyrpides N.C."/>
            <person name="Overbeek R."/>
        </authorList>
    </citation>
    <scope>NUCLEOTIDE SEQUENCE [LARGE SCALE GENOMIC DNA]</scope>
    <source>
        <strain>ATCC 23456 / CCUG 17765 / NCTC 10094 / 16M</strain>
    </source>
</reference>
<evidence type="ECO:0000255" key="1">
    <source>
        <dbReference type="HAMAP-Rule" id="MF_00750"/>
    </source>
</evidence>
<evidence type="ECO:0000305" key="2"/>
<comment type="function">
    <text evidence="1">Involved in the biosynthesis of the osmoprotectant glycine betaine. Catalyzes the oxidation of choline to betaine aldehyde and betaine aldehyde to glycine betaine at the same rate.</text>
</comment>
<comment type="catalytic activity">
    <reaction evidence="1">
        <text>choline + A = betaine aldehyde + AH2</text>
        <dbReference type="Rhea" id="RHEA:17433"/>
        <dbReference type="ChEBI" id="CHEBI:13193"/>
        <dbReference type="ChEBI" id="CHEBI:15354"/>
        <dbReference type="ChEBI" id="CHEBI:15710"/>
        <dbReference type="ChEBI" id="CHEBI:17499"/>
        <dbReference type="EC" id="1.1.99.1"/>
    </reaction>
</comment>
<comment type="catalytic activity">
    <reaction evidence="1">
        <text>betaine aldehyde + NAD(+) + H2O = glycine betaine + NADH + 2 H(+)</text>
        <dbReference type="Rhea" id="RHEA:15305"/>
        <dbReference type="ChEBI" id="CHEBI:15377"/>
        <dbReference type="ChEBI" id="CHEBI:15378"/>
        <dbReference type="ChEBI" id="CHEBI:15710"/>
        <dbReference type="ChEBI" id="CHEBI:17750"/>
        <dbReference type="ChEBI" id="CHEBI:57540"/>
        <dbReference type="ChEBI" id="CHEBI:57945"/>
        <dbReference type="EC" id="1.2.1.8"/>
    </reaction>
</comment>
<comment type="cofactor">
    <cofactor evidence="1">
        <name>FAD</name>
        <dbReference type="ChEBI" id="CHEBI:57692"/>
    </cofactor>
</comment>
<comment type="pathway">
    <text evidence="1">Amine and polyamine biosynthesis; betaine biosynthesis via choline pathway; betaine aldehyde from choline (cytochrome c reductase route): step 1/1.</text>
</comment>
<comment type="similarity">
    <text evidence="1">Belongs to the GMC oxidoreductase family.</text>
</comment>
<comment type="sequence caution" evidence="2">
    <conflict type="frameshift">
        <sequence resource="EMBL-CDS" id="AAL52561"/>
    </conflict>
</comment>
<organism>
    <name type="scientific">Brucella melitensis biotype 1 (strain ATCC 23456 / CCUG 17765 / NCTC 10094 / 16M)</name>
    <dbReference type="NCBI Taxonomy" id="224914"/>
    <lineage>
        <taxon>Bacteria</taxon>
        <taxon>Pseudomonadati</taxon>
        <taxon>Pseudomonadota</taxon>
        <taxon>Alphaproteobacteria</taxon>
        <taxon>Hyphomicrobiales</taxon>
        <taxon>Brucellaceae</taxon>
        <taxon>Brucella/Ochrobactrum group</taxon>
        <taxon>Brucella</taxon>
    </lineage>
</organism>
<feature type="chain" id="PRO_0000205584" description="Oxygen-dependent choline dehydrogenase">
    <location>
        <begin position="1"/>
        <end position="549"/>
    </location>
</feature>
<feature type="active site" description="Proton acceptor" evidence="1">
    <location>
        <position position="465"/>
    </location>
</feature>
<feature type="binding site" evidence="1">
    <location>
        <begin position="4"/>
        <end position="33"/>
    </location>
    <ligand>
        <name>FAD</name>
        <dbReference type="ChEBI" id="CHEBI:57692"/>
    </ligand>
</feature>
<proteinExistence type="inferred from homology"/>